<name>DHE4_SACSH</name>
<sequence length="423" mass="45828">MTKAMEELLTSNLFVQQVKKLYKVGELLGLDLDTLEALSQPERVIQVKIQIRGSDGKLKTFMGWRSQHNSALGPYKGGVRYSPNVTQDEVIALSMIMTWKNSLLLLPYGGGKGGIRVDPKKLTLKELEDLSRKYVQLIHNYLGSDVDIPAPDINTNPQTMAWFLDEYIKITGEVDFAVFTGKPSELGGIGVRLYSTGLGVATIAREAANKFIGGIEGSRVIIQGFGNVGSFTAKFLNEMGAKIIGVSDIGGGVISDDGIDVNKALEVVQSTGSVVNYPEGKKVTNEELLTSDCDILIPAAVENVINKFNAPKVKAKLIVEGANGPLTADADEIIKQRGIVVIPDILANAGGVVGSYVEWANNKSGGIISDEEAKKLIIDRMTNAFNALYEFHKRKFADQDLRTVAMALAVDRVVRAMKARGLL</sequence>
<proteinExistence type="inferred from homology"/>
<organism>
    <name type="scientific">Saccharolobus shibatae (strain ATCC 51178 / DSM 5389 / JCM 8931 / NBRC 15437 / B12)</name>
    <name type="common">Sulfolobus shibatae</name>
    <dbReference type="NCBI Taxonomy" id="523848"/>
    <lineage>
        <taxon>Archaea</taxon>
        <taxon>Thermoproteota</taxon>
        <taxon>Thermoprotei</taxon>
        <taxon>Sulfolobales</taxon>
        <taxon>Sulfolobaceae</taxon>
        <taxon>Saccharolobus</taxon>
    </lineage>
</organism>
<dbReference type="EC" id="1.4.1.4"/>
<dbReference type="EMBL" id="CP077717">
    <property type="protein sequence ID" value="QXJ28753.1"/>
    <property type="molecule type" value="Genomic_DNA"/>
</dbReference>
<dbReference type="EMBL" id="X73990">
    <property type="protein sequence ID" value="CAA52168.1"/>
    <property type="molecule type" value="Genomic_DNA"/>
</dbReference>
<dbReference type="PIR" id="S37407">
    <property type="entry name" value="S37407"/>
</dbReference>
<dbReference type="SMR" id="P39475"/>
<dbReference type="KEGG" id="sshi:J5U23_01622"/>
<dbReference type="BRENDA" id="1.4.1.4">
    <property type="organism ID" value="6162"/>
</dbReference>
<dbReference type="Proteomes" id="UP000694018">
    <property type="component" value="Chromosome"/>
</dbReference>
<dbReference type="GO" id="GO:0004352">
    <property type="term" value="F:glutamate dehydrogenase (NAD+) activity"/>
    <property type="evidence" value="ECO:0007669"/>
    <property type="project" value="TreeGrafter"/>
</dbReference>
<dbReference type="GO" id="GO:0004354">
    <property type="term" value="F:glutamate dehydrogenase (NADP+) activity"/>
    <property type="evidence" value="ECO:0007669"/>
    <property type="project" value="UniProtKB-EC"/>
</dbReference>
<dbReference type="GO" id="GO:0006538">
    <property type="term" value="P:glutamate catabolic process"/>
    <property type="evidence" value="ECO:0007669"/>
    <property type="project" value="TreeGrafter"/>
</dbReference>
<dbReference type="CDD" id="cd01076">
    <property type="entry name" value="NAD_bind_1_Glu_DH"/>
    <property type="match status" value="1"/>
</dbReference>
<dbReference type="Gene3D" id="3.40.50.10860">
    <property type="entry name" value="Leucine Dehydrogenase, chain A, domain 1"/>
    <property type="match status" value="1"/>
</dbReference>
<dbReference type="Gene3D" id="3.40.50.720">
    <property type="entry name" value="NAD(P)-binding Rossmann-like Domain"/>
    <property type="match status" value="1"/>
</dbReference>
<dbReference type="InterPro" id="IPR046346">
    <property type="entry name" value="Aminoacid_DH-like_N_sf"/>
</dbReference>
<dbReference type="InterPro" id="IPR006095">
    <property type="entry name" value="Glu/Leu/Phe/Val/Trp_DH"/>
</dbReference>
<dbReference type="InterPro" id="IPR006096">
    <property type="entry name" value="Glu/Leu/Phe/Val/Trp_DH_C"/>
</dbReference>
<dbReference type="InterPro" id="IPR006097">
    <property type="entry name" value="Glu/Leu/Phe/Val/Trp_DH_dimer"/>
</dbReference>
<dbReference type="InterPro" id="IPR033524">
    <property type="entry name" value="Glu/Leu/Phe/Val_DH_AS"/>
</dbReference>
<dbReference type="InterPro" id="IPR014362">
    <property type="entry name" value="Glu_DH"/>
</dbReference>
<dbReference type="InterPro" id="IPR036291">
    <property type="entry name" value="NAD(P)-bd_dom_sf"/>
</dbReference>
<dbReference type="InterPro" id="IPR033922">
    <property type="entry name" value="NAD_bind_Glu_DH"/>
</dbReference>
<dbReference type="PANTHER" id="PTHR11606">
    <property type="entry name" value="GLUTAMATE DEHYDROGENASE"/>
    <property type="match status" value="1"/>
</dbReference>
<dbReference type="PANTHER" id="PTHR11606:SF13">
    <property type="entry name" value="GLUTAMATE DEHYDROGENASE 1, MITOCHONDRIAL"/>
    <property type="match status" value="1"/>
</dbReference>
<dbReference type="Pfam" id="PF00208">
    <property type="entry name" value="ELFV_dehydrog"/>
    <property type="match status" value="1"/>
</dbReference>
<dbReference type="Pfam" id="PF02812">
    <property type="entry name" value="ELFV_dehydrog_N"/>
    <property type="match status" value="1"/>
</dbReference>
<dbReference type="PIRSF" id="PIRSF000185">
    <property type="entry name" value="Glu_DH"/>
    <property type="match status" value="1"/>
</dbReference>
<dbReference type="PRINTS" id="PR00082">
    <property type="entry name" value="GLFDHDRGNASE"/>
</dbReference>
<dbReference type="SMART" id="SM00839">
    <property type="entry name" value="ELFV_dehydrog"/>
    <property type="match status" value="1"/>
</dbReference>
<dbReference type="SUPFAM" id="SSF53223">
    <property type="entry name" value="Aminoacid dehydrogenase-like, N-terminal domain"/>
    <property type="match status" value="1"/>
</dbReference>
<dbReference type="SUPFAM" id="SSF51735">
    <property type="entry name" value="NAD(P)-binding Rossmann-fold domains"/>
    <property type="match status" value="1"/>
</dbReference>
<dbReference type="PROSITE" id="PS00074">
    <property type="entry name" value="GLFV_DEHYDROGENASE"/>
    <property type="match status" value="1"/>
</dbReference>
<protein>
    <recommendedName>
        <fullName>NADP-specific glutamate dehydrogenase</fullName>
        <shortName>NADP-GDH</shortName>
        <ecNumber>1.4.1.4</ecNumber>
    </recommendedName>
</protein>
<reference evidence="3" key="1">
    <citation type="journal article" date="2021" name="Environ. Microbiol.">
        <title>New insights into the diversity and evolution of the archaeal mobilome from three complete genomes of Saccharolobus shibatae.</title>
        <authorList>
            <person name="Medvedeva S."/>
            <person name="Brandt D."/>
            <person name="Cvirkaite-Krupovic V."/>
            <person name="Liu Y."/>
            <person name="Severinov K."/>
            <person name="Ishino S."/>
            <person name="Ishino Y."/>
            <person name="Prangishvili D."/>
            <person name="Kalinowski J."/>
            <person name="Krupovic M."/>
        </authorList>
    </citation>
    <scope>NUCLEOTIDE SEQUENCE [LARGE SCALE GENOMIC DNA]</scope>
    <source>
        <strain>ATCC 51178 / DSM 5389 / JCM 8931 / NBRC 15437 / B12</strain>
    </source>
</reference>
<reference key="2">
    <citation type="journal article" date="1994" name="Gene">
        <title>PCR-mediated cloning and sequencing of the gene encoding glutamate dehydrogenase from the archaeon Sulfolobus shibatae: identification of putative amino-acid signatures for extremophilic adaptation.</title>
        <authorList>
            <person name="Benachenhou-Lahfa N."/>
            <person name="Labedan B."/>
            <person name="Forterre P."/>
        </authorList>
    </citation>
    <scope>NUCLEOTIDE SEQUENCE [GENOMIC DNA] OF 32-423</scope>
</reference>
<gene>
    <name type="primary">gdhA</name>
    <name evidence="3" type="ORF">J5U23_01622</name>
</gene>
<evidence type="ECO:0000255" key="1">
    <source>
        <dbReference type="PROSITE-ProRule" id="PRU10011"/>
    </source>
</evidence>
<evidence type="ECO:0000305" key="2"/>
<evidence type="ECO:0000312" key="3">
    <source>
        <dbReference type="EMBL" id="QXJ28753.1"/>
    </source>
</evidence>
<feature type="chain" id="PRO_0000182781" description="NADP-specific glutamate dehydrogenase">
    <location>
        <begin position="1"/>
        <end position="423"/>
    </location>
</feature>
<feature type="active site" evidence="1">
    <location>
        <position position="112"/>
    </location>
</feature>
<feature type="sequence conflict" description="In Ref. 2; CAA52168." evidence="2" ref="2">
    <original>T</original>
    <variation>A</variation>
    <location>
        <position position="327"/>
    </location>
</feature>
<feature type="sequence conflict" description="In Ref. 2; CAA52168." evidence="2" ref="2">
    <original>A</original>
    <variation>R</variation>
    <location>
        <position position="409"/>
    </location>
</feature>
<feature type="sequence conflict" description="In Ref. 2; CAA52168." evidence="2" ref="2">
    <original>RAMKARGLL</original>
    <variation>GMKARAI</variation>
    <location>
        <begin position="415"/>
        <end position="423"/>
    </location>
</feature>
<keyword id="KW-0521">NADP</keyword>
<keyword id="KW-0560">Oxidoreductase</keyword>
<accession>P39475</accession>
<accession>A0A8F5GTA9</accession>
<comment type="catalytic activity">
    <reaction>
        <text>L-glutamate + NADP(+) + H2O = 2-oxoglutarate + NH4(+) + NADPH + H(+)</text>
        <dbReference type="Rhea" id="RHEA:11612"/>
        <dbReference type="ChEBI" id="CHEBI:15377"/>
        <dbReference type="ChEBI" id="CHEBI:15378"/>
        <dbReference type="ChEBI" id="CHEBI:16810"/>
        <dbReference type="ChEBI" id="CHEBI:28938"/>
        <dbReference type="ChEBI" id="CHEBI:29985"/>
        <dbReference type="ChEBI" id="CHEBI:57783"/>
        <dbReference type="ChEBI" id="CHEBI:58349"/>
        <dbReference type="EC" id="1.4.1.4"/>
    </reaction>
</comment>
<comment type="subunit">
    <text>Homohexamer.</text>
</comment>
<comment type="similarity">
    <text evidence="2">Belongs to the Glu/Leu/Phe/Val dehydrogenases family.</text>
</comment>